<evidence type="ECO:0000250" key="1"/>
<evidence type="ECO:0000255" key="2">
    <source>
        <dbReference type="HAMAP-Rule" id="MF_00347"/>
    </source>
</evidence>
<reference key="1">
    <citation type="journal article" date="1993" name="Gene">
        <title>Cloning, sequence and characterization of the polyphosphate kinase-encoding gene (ppk) of Klebsiella aerogenes.</title>
        <authorList>
            <person name="Kato J."/>
            <person name="Yamamoto T."/>
            <person name="Yamada K."/>
            <person name="Ohtake H."/>
        </authorList>
    </citation>
    <scope>NUCLEOTIDE SEQUENCE [GENOMIC DNA]</scope>
    <source>
        <strain>ATCC 9621 / NBRC 3321 / NCIMB 8021</strain>
    </source>
</reference>
<accession>Q07411</accession>
<proteinExistence type="inferred from homology"/>
<protein>
    <recommendedName>
        <fullName evidence="2">Polyphosphate kinase</fullName>
        <ecNumber evidence="2">2.7.4.1</ecNumber>
    </recommendedName>
    <alternativeName>
        <fullName evidence="2">ATP-polyphosphate phosphotransferase</fullName>
    </alternativeName>
    <alternativeName>
        <fullName evidence="2">Polyphosphoric acid kinase</fullName>
    </alternativeName>
</protein>
<feature type="initiator methionine" description="Removed" evidence="1">
    <location>
        <position position="1"/>
    </location>
</feature>
<feature type="chain" id="PRO_0000128645" description="Polyphosphate kinase">
    <location>
        <begin position="2"/>
        <end position="685"/>
    </location>
</feature>
<feature type="domain" description="PLD phosphodiesterase 1" evidence="2">
    <location>
        <begin position="427"/>
        <end position="461"/>
    </location>
</feature>
<feature type="domain" description="PLD phosphodiesterase 2" evidence="2">
    <location>
        <begin position="584"/>
        <end position="614"/>
    </location>
</feature>
<feature type="active site" description="Phosphohistidine intermediate" evidence="2">
    <location>
        <position position="432"/>
    </location>
</feature>
<feature type="binding site" evidence="2">
    <location>
        <position position="45"/>
    </location>
    <ligand>
        <name>ATP</name>
        <dbReference type="ChEBI" id="CHEBI:30616"/>
    </ligand>
</feature>
<feature type="binding site" evidence="2">
    <location>
        <position position="372"/>
    </location>
    <ligand>
        <name>Mg(2+)</name>
        <dbReference type="ChEBI" id="CHEBI:18420"/>
    </ligand>
</feature>
<feature type="binding site" evidence="2">
    <location>
        <position position="402"/>
    </location>
    <ligand>
        <name>Mg(2+)</name>
        <dbReference type="ChEBI" id="CHEBI:18420"/>
    </ligand>
</feature>
<feature type="binding site" evidence="2">
    <location>
        <position position="465"/>
    </location>
    <ligand>
        <name>ATP</name>
        <dbReference type="ChEBI" id="CHEBI:30616"/>
    </ligand>
</feature>
<feature type="binding site" evidence="2">
    <location>
        <position position="561"/>
    </location>
    <ligand>
        <name>ATP</name>
        <dbReference type="ChEBI" id="CHEBI:30616"/>
    </ligand>
</feature>
<feature type="binding site" evidence="2">
    <location>
        <position position="589"/>
    </location>
    <ligand>
        <name>ATP</name>
        <dbReference type="ChEBI" id="CHEBI:30616"/>
    </ligand>
</feature>
<gene>
    <name evidence="2" type="primary">ppk</name>
</gene>
<sequence>MGQEKLYIEKELSWLAFNERVLQEAADKSNPLIERMRFLGIYSNNLDEFYKVRFAELKRRIIISEEQGLNSHSRHLLGKIQSRVLKADQEFDGLYNELLLEMARNQIFLINERQLSVNQQNWLRHYFKHYLRQHITPILINRETDLVQFLKDDYTYLAVEIIRGESIRYPLLEIPSDKVPRFVNLPPETPRRRKPMILLDNILRYCLDDIFKGFFDYDALNAYSMKMTRDAEYDLVHEMEASLMELMSSSLKQPDAEPVRFVYQRDMPDAMVEMLRDKLTISRYDSIVPGGRYHNFKDFIGFPNVGKANLVNKPLPRLRHLWFDKFRNGFDAIRERDVLLYYPYHTFEHVLELLRQASFDPSVLAIKINIYRVAKDSRIIDAMIHAAHNAKKVTVVVELQARFDEEANIHWARRLTEAGVHVIFSAPGLKIHAKLFLISRKEGDDVVRYAHIGTGNFNEKTSLIYTDYSLLTADARITNEVRRVFNFIENPYRPVSFDYLLVSPQNSRRLLYDMIDKEIANAQKGLSSGITLKLNNLVDKGLVDRLYAASSSGVPVNLLIRGMCSLIPELEGISDNIRVISIVDRYLEHDRIYIFDNAGDKQVYLSSADWMTRNIDYRIEVAAPLLDPRLKQQILDIIEILFSDTVKARYIDKELSNRYVPRGNRRKVRSQLAIYDYIKSLEQPD</sequence>
<dbReference type="EC" id="2.7.4.1" evidence="2"/>
<dbReference type="EMBL" id="D14445">
    <property type="protein sequence ID" value="BAA03335.1"/>
    <property type="molecule type" value="Genomic_DNA"/>
</dbReference>
<dbReference type="SMR" id="Q07411"/>
<dbReference type="GO" id="GO:0009358">
    <property type="term" value="C:polyphosphate kinase complex"/>
    <property type="evidence" value="ECO:0007669"/>
    <property type="project" value="InterPro"/>
</dbReference>
<dbReference type="GO" id="GO:0005524">
    <property type="term" value="F:ATP binding"/>
    <property type="evidence" value="ECO:0007669"/>
    <property type="project" value="UniProtKB-KW"/>
</dbReference>
<dbReference type="GO" id="GO:0046872">
    <property type="term" value="F:metal ion binding"/>
    <property type="evidence" value="ECO:0007669"/>
    <property type="project" value="UniProtKB-KW"/>
</dbReference>
<dbReference type="GO" id="GO:0008976">
    <property type="term" value="F:polyphosphate kinase activity"/>
    <property type="evidence" value="ECO:0007669"/>
    <property type="project" value="UniProtKB-UniRule"/>
</dbReference>
<dbReference type="GO" id="GO:0006799">
    <property type="term" value="P:polyphosphate biosynthetic process"/>
    <property type="evidence" value="ECO:0007669"/>
    <property type="project" value="UniProtKB-UniRule"/>
</dbReference>
<dbReference type="CDD" id="cd09167">
    <property type="entry name" value="PLDc_EcPPK1_C2_like"/>
    <property type="match status" value="1"/>
</dbReference>
<dbReference type="FunFam" id="1.20.58.310:FF:000001">
    <property type="entry name" value="Polyphosphate kinase"/>
    <property type="match status" value="1"/>
</dbReference>
<dbReference type="FunFam" id="3.30.1840.10:FF:000001">
    <property type="entry name" value="Polyphosphate kinase"/>
    <property type="match status" value="1"/>
</dbReference>
<dbReference type="FunFam" id="3.30.870.10:FF:000001">
    <property type="entry name" value="Polyphosphate kinase"/>
    <property type="match status" value="1"/>
</dbReference>
<dbReference type="FunFam" id="3.30.870.10:FF:000007">
    <property type="entry name" value="Polyphosphate kinase"/>
    <property type="match status" value="1"/>
</dbReference>
<dbReference type="Gene3D" id="3.30.870.10">
    <property type="entry name" value="Endonuclease Chain A"/>
    <property type="match status" value="2"/>
</dbReference>
<dbReference type="Gene3D" id="3.30.1840.10">
    <property type="entry name" value="Polyphosphate kinase middle domain"/>
    <property type="match status" value="1"/>
</dbReference>
<dbReference type="Gene3D" id="1.20.58.310">
    <property type="entry name" value="Polyphosphate kinase N-terminal domain"/>
    <property type="match status" value="1"/>
</dbReference>
<dbReference type="HAMAP" id="MF_00347">
    <property type="entry name" value="Polyphosphate_kinase"/>
    <property type="match status" value="1"/>
</dbReference>
<dbReference type="InterPro" id="IPR001736">
    <property type="entry name" value="PLipase_D/transphosphatidylase"/>
</dbReference>
<dbReference type="InterPro" id="IPR003414">
    <property type="entry name" value="PP_kinase"/>
</dbReference>
<dbReference type="InterPro" id="IPR041108">
    <property type="entry name" value="PP_kinase_C_1"/>
</dbReference>
<dbReference type="InterPro" id="IPR024953">
    <property type="entry name" value="PP_kinase_middle"/>
</dbReference>
<dbReference type="InterPro" id="IPR036830">
    <property type="entry name" value="PP_kinase_middle_dom_sf"/>
</dbReference>
<dbReference type="InterPro" id="IPR025200">
    <property type="entry name" value="PPK_C_dom2"/>
</dbReference>
<dbReference type="InterPro" id="IPR025198">
    <property type="entry name" value="PPK_N_dom"/>
</dbReference>
<dbReference type="InterPro" id="IPR036832">
    <property type="entry name" value="PPK_N_dom_sf"/>
</dbReference>
<dbReference type="NCBIfam" id="TIGR03705">
    <property type="entry name" value="poly_P_kin"/>
    <property type="match status" value="1"/>
</dbReference>
<dbReference type="NCBIfam" id="NF003917">
    <property type="entry name" value="PRK05443.1-1"/>
    <property type="match status" value="1"/>
</dbReference>
<dbReference type="PANTHER" id="PTHR30218">
    <property type="entry name" value="POLYPHOSPHATE KINASE"/>
    <property type="match status" value="1"/>
</dbReference>
<dbReference type="PANTHER" id="PTHR30218:SF0">
    <property type="entry name" value="POLYPHOSPHATE KINASE"/>
    <property type="match status" value="1"/>
</dbReference>
<dbReference type="Pfam" id="PF02503">
    <property type="entry name" value="PP_kinase"/>
    <property type="match status" value="1"/>
</dbReference>
<dbReference type="Pfam" id="PF13090">
    <property type="entry name" value="PP_kinase_C"/>
    <property type="match status" value="1"/>
</dbReference>
<dbReference type="Pfam" id="PF17941">
    <property type="entry name" value="PP_kinase_C_1"/>
    <property type="match status" value="1"/>
</dbReference>
<dbReference type="Pfam" id="PF13089">
    <property type="entry name" value="PP_kinase_N"/>
    <property type="match status" value="1"/>
</dbReference>
<dbReference type="PIRSF" id="PIRSF015589">
    <property type="entry name" value="PP_kinase"/>
    <property type="match status" value="1"/>
</dbReference>
<dbReference type="SUPFAM" id="SSF56024">
    <property type="entry name" value="Phospholipase D/nuclease"/>
    <property type="match status" value="2"/>
</dbReference>
<dbReference type="SUPFAM" id="SSF143724">
    <property type="entry name" value="PHP14-like"/>
    <property type="match status" value="1"/>
</dbReference>
<dbReference type="SUPFAM" id="SSF140356">
    <property type="entry name" value="PPK N-terminal domain-like"/>
    <property type="match status" value="1"/>
</dbReference>
<dbReference type="PROSITE" id="PS50035">
    <property type="entry name" value="PLD"/>
    <property type="match status" value="2"/>
</dbReference>
<keyword id="KW-0067">ATP-binding</keyword>
<keyword id="KW-0418">Kinase</keyword>
<keyword id="KW-0460">Magnesium</keyword>
<keyword id="KW-0479">Metal-binding</keyword>
<keyword id="KW-0547">Nucleotide-binding</keyword>
<keyword id="KW-0597">Phosphoprotein</keyword>
<keyword id="KW-0677">Repeat</keyword>
<keyword id="KW-0808">Transferase</keyword>
<comment type="function">
    <text evidence="2">Catalyzes the reversible transfer of the terminal phosphate of ATP to form a long-chain polyphosphate (polyP).</text>
</comment>
<comment type="catalytic activity">
    <reaction evidence="2">
        <text>[phosphate](n) + ATP = [phosphate](n+1) + ADP</text>
        <dbReference type="Rhea" id="RHEA:19573"/>
        <dbReference type="Rhea" id="RHEA-COMP:9859"/>
        <dbReference type="Rhea" id="RHEA-COMP:14280"/>
        <dbReference type="ChEBI" id="CHEBI:16838"/>
        <dbReference type="ChEBI" id="CHEBI:30616"/>
        <dbReference type="ChEBI" id="CHEBI:456216"/>
        <dbReference type="EC" id="2.7.4.1"/>
    </reaction>
</comment>
<comment type="cofactor">
    <cofactor evidence="2">
        <name>Mg(2+)</name>
        <dbReference type="ChEBI" id="CHEBI:18420"/>
    </cofactor>
</comment>
<comment type="PTM">
    <text evidence="2">An intermediate of this reaction is the autophosphorylated ppk in which a phosphate is covalently linked to a histidine residue through a N-P bond.</text>
</comment>
<comment type="similarity">
    <text evidence="2">Belongs to the polyphosphate kinase 1 (PPK1) family.</text>
</comment>
<name>PPK1_KLEPN</name>
<organism>
    <name type="scientific">Klebsiella pneumoniae</name>
    <dbReference type="NCBI Taxonomy" id="573"/>
    <lineage>
        <taxon>Bacteria</taxon>
        <taxon>Pseudomonadati</taxon>
        <taxon>Pseudomonadota</taxon>
        <taxon>Gammaproteobacteria</taxon>
        <taxon>Enterobacterales</taxon>
        <taxon>Enterobacteriaceae</taxon>
        <taxon>Klebsiella/Raoultella group</taxon>
        <taxon>Klebsiella</taxon>
        <taxon>Klebsiella pneumoniae complex</taxon>
    </lineage>
</organism>